<reference key="1">
    <citation type="journal article" date="1997" name="Nature">
        <title>The complete genome sequence of the hyperthermophilic, sulphate-reducing archaeon Archaeoglobus fulgidus.</title>
        <authorList>
            <person name="Klenk H.-P."/>
            <person name="Clayton R.A."/>
            <person name="Tomb J.-F."/>
            <person name="White O."/>
            <person name="Nelson K.E."/>
            <person name="Ketchum K.A."/>
            <person name="Dodson R.J."/>
            <person name="Gwinn M.L."/>
            <person name="Hickey E.K."/>
            <person name="Peterson J.D."/>
            <person name="Richardson D.L."/>
            <person name="Kerlavage A.R."/>
            <person name="Graham D.E."/>
            <person name="Kyrpides N.C."/>
            <person name="Fleischmann R.D."/>
            <person name="Quackenbush J."/>
            <person name="Lee N.H."/>
            <person name="Sutton G.G."/>
            <person name="Gill S.R."/>
            <person name="Kirkness E.F."/>
            <person name="Dougherty B.A."/>
            <person name="McKenney K."/>
            <person name="Adams M.D."/>
            <person name="Loftus B.J."/>
            <person name="Peterson S.N."/>
            <person name="Reich C.I."/>
            <person name="McNeil L.K."/>
            <person name="Badger J.H."/>
            <person name="Glodek A."/>
            <person name="Zhou L."/>
            <person name="Overbeek R."/>
            <person name="Gocayne J.D."/>
            <person name="Weidman J.F."/>
            <person name="McDonald L.A."/>
            <person name="Utterback T.R."/>
            <person name="Cotton M.D."/>
            <person name="Spriggs T."/>
            <person name="Artiach P."/>
            <person name="Kaine B.P."/>
            <person name="Sykes S.M."/>
            <person name="Sadow P.W."/>
            <person name="D'Andrea K.P."/>
            <person name="Bowman C."/>
            <person name="Fujii C."/>
            <person name="Garland S.A."/>
            <person name="Mason T.M."/>
            <person name="Olsen G.J."/>
            <person name="Fraser C.M."/>
            <person name="Smith H.O."/>
            <person name="Woese C.R."/>
            <person name="Venter J.C."/>
        </authorList>
    </citation>
    <scope>NUCLEOTIDE SEQUENCE [LARGE SCALE GENOMIC DNA]</scope>
    <source>
        <strain>ATCC 49558 / DSM 4304 / JCM 9628 / NBRC 100126 / VC-16</strain>
    </source>
</reference>
<organism>
    <name type="scientific">Archaeoglobus fulgidus (strain ATCC 49558 / DSM 4304 / JCM 9628 / NBRC 100126 / VC-16)</name>
    <dbReference type="NCBI Taxonomy" id="224325"/>
    <lineage>
        <taxon>Archaea</taxon>
        <taxon>Methanobacteriati</taxon>
        <taxon>Methanobacteriota</taxon>
        <taxon>Archaeoglobi</taxon>
        <taxon>Archaeoglobales</taxon>
        <taxon>Archaeoglobaceae</taxon>
        <taxon>Archaeoglobus</taxon>
    </lineage>
</organism>
<proteinExistence type="predicted"/>
<name>Y2352_ARCFU</name>
<protein>
    <recommendedName>
        <fullName>Uncharacterized protein AF_2352</fullName>
    </recommendedName>
</protein>
<sequence length="91" mass="10478">MTSTFFKYSVLLLPALINLAAFLTNFQTNTLPVEPINLYLSNFVHSDFYHLTGNIVVYIVSAFLSFIFFRNSDMKGFSGYLLPSYSFLYHI</sequence>
<gene>
    <name type="ordered locus">AF_2352</name>
</gene>
<keyword id="KW-1003">Cell membrane</keyword>
<keyword id="KW-0472">Membrane</keyword>
<keyword id="KW-1185">Reference proteome</keyword>
<keyword id="KW-0812">Transmembrane</keyword>
<keyword id="KW-1133">Transmembrane helix</keyword>
<feature type="chain" id="PRO_0000128146" description="Uncharacterized protein AF_2352">
    <location>
        <begin position="1"/>
        <end position="91"/>
    </location>
</feature>
<feature type="transmembrane region" description="Helical" evidence="1">
    <location>
        <begin position="5"/>
        <end position="27"/>
    </location>
</feature>
<feature type="transmembrane region" description="Helical" evidence="1">
    <location>
        <begin position="47"/>
        <end position="69"/>
    </location>
</feature>
<accession>O30318</accession>
<comment type="subcellular location">
    <subcellularLocation>
        <location evidence="2">Cell membrane</location>
        <topology evidence="2">Multi-pass membrane protein</topology>
    </subcellularLocation>
</comment>
<evidence type="ECO:0000255" key="1"/>
<evidence type="ECO:0000305" key="2"/>
<dbReference type="EMBL" id="AE000782">
    <property type="protein sequence ID" value="AAB91312.1"/>
    <property type="molecule type" value="Genomic_DNA"/>
</dbReference>
<dbReference type="PIR" id="H69543">
    <property type="entry name" value="H69543"/>
</dbReference>
<dbReference type="STRING" id="224325.AF_2352"/>
<dbReference type="PaxDb" id="224325-AF_2352"/>
<dbReference type="EnsemblBacteria" id="AAB91312">
    <property type="protein sequence ID" value="AAB91312"/>
    <property type="gene ID" value="AF_2352"/>
</dbReference>
<dbReference type="KEGG" id="afu:AF_2352"/>
<dbReference type="HOGENOM" id="CLU_2419856_0_0_2"/>
<dbReference type="Proteomes" id="UP000002199">
    <property type="component" value="Chromosome"/>
</dbReference>
<dbReference type="GO" id="GO:0005886">
    <property type="term" value="C:plasma membrane"/>
    <property type="evidence" value="ECO:0007669"/>
    <property type="project" value="UniProtKB-SubCell"/>
</dbReference>